<keyword id="KW-0963">Cytoplasm</keyword>
<keyword id="KW-0489">Methyltransferase</keyword>
<keyword id="KW-0698">rRNA processing</keyword>
<keyword id="KW-0949">S-adenosyl-L-methionine</keyword>
<keyword id="KW-0808">Transferase</keyword>
<organism>
    <name type="scientific">Salmonella dublin (strain CT_02021853)</name>
    <dbReference type="NCBI Taxonomy" id="439851"/>
    <lineage>
        <taxon>Bacteria</taxon>
        <taxon>Pseudomonadati</taxon>
        <taxon>Pseudomonadota</taxon>
        <taxon>Gammaproteobacteria</taxon>
        <taxon>Enterobacterales</taxon>
        <taxon>Enterobacteriaceae</taxon>
        <taxon>Salmonella</taxon>
    </lineage>
</organism>
<accession>B5FI64</accession>
<gene>
    <name evidence="1" type="primary">rsmH</name>
    <name type="synonym">mraW</name>
    <name type="ordered locus">SeD_A0129</name>
</gene>
<sequence>MMENFKHTTVLLDEAVNGLNIRPDGIYIDGTFGRGGHSRLILSQLGEEGRLLAIDRDPQAIAVAQTINDPRFSIIHGPFSALADYVAERELTGKIDGILLDLGVSSPQLDDAERGFSFMRDGPLDMRMDPTRGQSAAEWLQTAEEADIAWVLKTFGEERFAKRIARAIVERNREQPMTRTKELAEVVAAATPVKDKFKHPATRTFQAVRIWVNSELEEIEQALKSSLSVLAPGGRLSIISFHSLEDRIVKRFMREQSRGPQVPAGLPMTEAQLKKLGGRELRALGKLMPGEKEVAENPRARSSVLRIAERTNA</sequence>
<reference key="1">
    <citation type="journal article" date="2011" name="J. Bacteriol.">
        <title>Comparative genomics of 28 Salmonella enterica isolates: evidence for CRISPR-mediated adaptive sublineage evolution.</title>
        <authorList>
            <person name="Fricke W.F."/>
            <person name="Mammel M.K."/>
            <person name="McDermott P.F."/>
            <person name="Tartera C."/>
            <person name="White D.G."/>
            <person name="Leclerc J.E."/>
            <person name="Ravel J."/>
            <person name="Cebula T.A."/>
        </authorList>
    </citation>
    <scope>NUCLEOTIDE SEQUENCE [LARGE SCALE GENOMIC DNA]</scope>
    <source>
        <strain>CT_02021853</strain>
    </source>
</reference>
<feature type="chain" id="PRO_0000387099" description="Ribosomal RNA small subunit methyltransferase H">
    <location>
        <begin position="1"/>
        <end position="313"/>
    </location>
</feature>
<feature type="binding site" evidence="1">
    <location>
        <begin position="35"/>
        <end position="37"/>
    </location>
    <ligand>
        <name>S-adenosyl-L-methionine</name>
        <dbReference type="ChEBI" id="CHEBI:59789"/>
    </ligand>
</feature>
<feature type="binding site" evidence="1">
    <location>
        <position position="55"/>
    </location>
    <ligand>
        <name>S-adenosyl-L-methionine</name>
        <dbReference type="ChEBI" id="CHEBI:59789"/>
    </ligand>
</feature>
<feature type="binding site" evidence="1">
    <location>
        <position position="79"/>
    </location>
    <ligand>
        <name>S-adenosyl-L-methionine</name>
        <dbReference type="ChEBI" id="CHEBI:59789"/>
    </ligand>
</feature>
<feature type="binding site" evidence="1">
    <location>
        <position position="101"/>
    </location>
    <ligand>
        <name>S-adenosyl-L-methionine</name>
        <dbReference type="ChEBI" id="CHEBI:59789"/>
    </ligand>
</feature>
<feature type="binding site" evidence="1">
    <location>
        <position position="108"/>
    </location>
    <ligand>
        <name>S-adenosyl-L-methionine</name>
        <dbReference type="ChEBI" id="CHEBI:59789"/>
    </ligand>
</feature>
<dbReference type="EC" id="2.1.1.199" evidence="1"/>
<dbReference type="EMBL" id="CP001144">
    <property type="protein sequence ID" value="ACH75242.1"/>
    <property type="molecule type" value="Genomic_DNA"/>
</dbReference>
<dbReference type="RefSeq" id="WP_000970444.1">
    <property type="nucleotide sequence ID" value="NC_011205.1"/>
</dbReference>
<dbReference type="SMR" id="B5FI64"/>
<dbReference type="KEGG" id="sed:SeD_A0129"/>
<dbReference type="HOGENOM" id="CLU_038422_2_0_6"/>
<dbReference type="Proteomes" id="UP000008322">
    <property type="component" value="Chromosome"/>
</dbReference>
<dbReference type="GO" id="GO:0005737">
    <property type="term" value="C:cytoplasm"/>
    <property type="evidence" value="ECO:0007669"/>
    <property type="project" value="UniProtKB-SubCell"/>
</dbReference>
<dbReference type="GO" id="GO:0071424">
    <property type="term" value="F:rRNA (cytosine-N4-)-methyltransferase activity"/>
    <property type="evidence" value="ECO:0007669"/>
    <property type="project" value="UniProtKB-UniRule"/>
</dbReference>
<dbReference type="GO" id="GO:0070475">
    <property type="term" value="P:rRNA base methylation"/>
    <property type="evidence" value="ECO:0007669"/>
    <property type="project" value="UniProtKB-UniRule"/>
</dbReference>
<dbReference type="FunFam" id="1.10.150.170:FF:000001">
    <property type="entry name" value="Ribosomal RNA small subunit methyltransferase H"/>
    <property type="match status" value="1"/>
</dbReference>
<dbReference type="Gene3D" id="1.10.150.170">
    <property type="entry name" value="Putative methyltransferase TM0872, insert domain"/>
    <property type="match status" value="1"/>
</dbReference>
<dbReference type="Gene3D" id="3.40.50.150">
    <property type="entry name" value="Vaccinia Virus protein VP39"/>
    <property type="match status" value="1"/>
</dbReference>
<dbReference type="HAMAP" id="MF_01007">
    <property type="entry name" value="16SrRNA_methyltr_H"/>
    <property type="match status" value="1"/>
</dbReference>
<dbReference type="InterPro" id="IPR002903">
    <property type="entry name" value="RsmH"/>
</dbReference>
<dbReference type="InterPro" id="IPR023397">
    <property type="entry name" value="SAM-dep_MeTrfase_MraW_recog"/>
</dbReference>
<dbReference type="InterPro" id="IPR029063">
    <property type="entry name" value="SAM-dependent_MTases_sf"/>
</dbReference>
<dbReference type="NCBIfam" id="TIGR00006">
    <property type="entry name" value="16S rRNA (cytosine(1402)-N(4))-methyltransferase RsmH"/>
    <property type="match status" value="1"/>
</dbReference>
<dbReference type="PANTHER" id="PTHR11265:SF0">
    <property type="entry name" value="12S RRNA N4-METHYLCYTIDINE METHYLTRANSFERASE"/>
    <property type="match status" value="1"/>
</dbReference>
<dbReference type="PANTHER" id="PTHR11265">
    <property type="entry name" value="S-ADENOSYL-METHYLTRANSFERASE MRAW"/>
    <property type="match status" value="1"/>
</dbReference>
<dbReference type="Pfam" id="PF01795">
    <property type="entry name" value="Methyltransf_5"/>
    <property type="match status" value="1"/>
</dbReference>
<dbReference type="PIRSF" id="PIRSF004486">
    <property type="entry name" value="MraW"/>
    <property type="match status" value="1"/>
</dbReference>
<dbReference type="SUPFAM" id="SSF81799">
    <property type="entry name" value="Putative methyltransferase TM0872, insert domain"/>
    <property type="match status" value="1"/>
</dbReference>
<dbReference type="SUPFAM" id="SSF53335">
    <property type="entry name" value="S-adenosyl-L-methionine-dependent methyltransferases"/>
    <property type="match status" value="1"/>
</dbReference>
<evidence type="ECO:0000255" key="1">
    <source>
        <dbReference type="HAMAP-Rule" id="MF_01007"/>
    </source>
</evidence>
<proteinExistence type="inferred from homology"/>
<comment type="function">
    <text evidence="1">Specifically methylates the N4 position of cytidine in position 1402 (C1402) of 16S rRNA.</text>
</comment>
<comment type="catalytic activity">
    <reaction evidence="1">
        <text>cytidine(1402) in 16S rRNA + S-adenosyl-L-methionine = N(4)-methylcytidine(1402) in 16S rRNA + S-adenosyl-L-homocysteine + H(+)</text>
        <dbReference type="Rhea" id="RHEA:42928"/>
        <dbReference type="Rhea" id="RHEA-COMP:10286"/>
        <dbReference type="Rhea" id="RHEA-COMP:10287"/>
        <dbReference type="ChEBI" id="CHEBI:15378"/>
        <dbReference type="ChEBI" id="CHEBI:57856"/>
        <dbReference type="ChEBI" id="CHEBI:59789"/>
        <dbReference type="ChEBI" id="CHEBI:74506"/>
        <dbReference type="ChEBI" id="CHEBI:82748"/>
        <dbReference type="EC" id="2.1.1.199"/>
    </reaction>
</comment>
<comment type="subcellular location">
    <subcellularLocation>
        <location evidence="1">Cytoplasm</location>
    </subcellularLocation>
</comment>
<comment type="similarity">
    <text evidence="1">Belongs to the methyltransferase superfamily. RsmH family.</text>
</comment>
<name>RSMH_SALDC</name>
<protein>
    <recommendedName>
        <fullName evidence="1">Ribosomal RNA small subunit methyltransferase H</fullName>
        <ecNumber evidence="1">2.1.1.199</ecNumber>
    </recommendedName>
    <alternativeName>
        <fullName evidence="1">16S rRNA m(4)C1402 methyltransferase</fullName>
    </alternativeName>
    <alternativeName>
        <fullName evidence="1">rRNA (cytosine-N(4)-)-methyltransferase RsmH</fullName>
    </alternativeName>
</protein>